<gene>
    <name evidence="1" type="primary">engB</name>
    <name type="ordered locus">lmo1558</name>
</gene>
<dbReference type="EMBL" id="AL591979">
    <property type="protein sequence ID" value="CAC99636.1"/>
    <property type="molecule type" value="Genomic_DNA"/>
</dbReference>
<dbReference type="PIR" id="AF1269">
    <property type="entry name" value="AF1269"/>
</dbReference>
<dbReference type="RefSeq" id="NP_465083.1">
    <property type="nucleotide sequence ID" value="NC_003210.1"/>
</dbReference>
<dbReference type="SMR" id="Q8Y6X3"/>
<dbReference type="STRING" id="169963.gene:17594215"/>
<dbReference type="PaxDb" id="169963-lmo1558"/>
<dbReference type="EnsemblBacteria" id="CAC99636">
    <property type="protein sequence ID" value="CAC99636"/>
    <property type="gene ID" value="CAC99636"/>
</dbReference>
<dbReference type="GeneID" id="986915"/>
<dbReference type="KEGG" id="lmo:lmo1558"/>
<dbReference type="PATRIC" id="fig|169963.11.peg.1599"/>
<dbReference type="eggNOG" id="COG0218">
    <property type="taxonomic scope" value="Bacteria"/>
</dbReference>
<dbReference type="HOGENOM" id="CLU_033732_3_0_9"/>
<dbReference type="OrthoDB" id="9804921at2"/>
<dbReference type="PhylomeDB" id="Q8Y6X3"/>
<dbReference type="BioCyc" id="LMON169963:LMO1558-MONOMER"/>
<dbReference type="Proteomes" id="UP000000817">
    <property type="component" value="Chromosome"/>
</dbReference>
<dbReference type="GO" id="GO:0005829">
    <property type="term" value="C:cytosol"/>
    <property type="evidence" value="ECO:0000318"/>
    <property type="project" value="GO_Central"/>
</dbReference>
<dbReference type="GO" id="GO:0005525">
    <property type="term" value="F:GTP binding"/>
    <property type="evidence" value="ECO:0007669"/>
    <property type="project" value="UniProtKB-UniRule"/>
</dbReference>
<dbReference type="GO" id="GO:0046872">
    <property type="term" value="F:metal ion binding"/>
    <property type="evidence" value="ECO:0007669"/>
    <property type="project" value="UniProtKB-KW"/>
</dbReference>
<dbReference type="GO" id="GO:0000917">
    <property type="term" value="P:division septum assembly"/>
    <property type="evidence" value="ECO:0007669"/>
    <property type="project" value="UniProtKB-KW"/>
</dbReference>
<dbReference type="CDD" id="cd01876">
    <property type="entry name" value="YihA_EngB"/>
    <property type="match status" value="1"/>
</dbReference>
<dbReference type="FunFam" id="3.40.50.300:FF:000098">
    <property type="entry name" value="Probable GTP-binding protein EngB"/>
    <property type="match status" value="1"/>
</dbReference>
<dbReference type="Gene3D" id="3.40.50.300">
    <property type="entry name" value="P-loop containing nucleotide triphosphate hydrolases"/>
    <property type="match status" value="1"/>
</dbReference>
<dbReference type="HAMAP" id="MF_00321">
    <property type="entry name" value="GTPase_EngB"/>
    <property type="match status" value="1"/>
</dbReference>
<dbReference type="InterPro" id="IPR030393">
    <property type="entry name" value="G_ENGB_dom"/>
</dbReference>
<dbReference type="InterPro" id="IPR006073">
    <property type="entry name" value="GTP-bd"/>
</dbReference>
<dbReference type="InterPro" id="IPR019987">
    <property type="entry name" value="GTP-bd_ribosome_bio_YsxC"/>
</dbReference>
<dbReference type="InterPro" id="IPR027417">
    <property type="entry name" value="P-loop_NTPase"/>
</dbReference>
<dbReference type="NCBIfam" id="TIGR03598">
    <property type="entry name" value="GTPase_YsxC"/>
    <property type="match status" value="1"/>
</dbReference>
<dbReference type="PANTHER" id="PTHR11649:SF13">
    <property type="entry name" value="ENGB-TYPE G DOMAIN-CONTAINING PROTEIN"/>
    <property type="match status" value="1"/>
</dbReference>
<dbReference type="PANTHER" id="PTHR11649">
    <property type="entry name" value="MSS1/TRME-RELATED GTP-BINDING PROTEIN"/>
    <property type="match status" value="1"/>
</dbReference>
<dbReference type="Pfam" id="PF01926">
    <property type="entry name" value="MMR_HSR1"/>
    <property type="match status" value="1"/>
</dbReference>
<dbReference type="SUPFAM" id="SSF52540">
    <property type="entry name" value="P-loop containing nucleoside triphosphate hydrolases"/>
    <property type="match status" value="1"/>
</dbReference>
<dbReference type="PROSITE" id="PS51706">
    <property type="entry name" value="G_ENGB"/>
    <property type="match status" value="1"/>
</dbReference>
<evidence type="ECO:0000255" key="1">
    <source>
        <dbReference type="HAMAP-Rule" id="MF_00321"/>
    </source>
</evidence>
<proteinExistence type="inferred from homology"/>
<comment type="function">
    <text evidence="1">Necessary for normal cell division and for the maintenance of normal septation.</text>
</comment>
<comment type="cofactor">
    <cofactor evidence="1">
        <name>Mg(2+)</name>
        <dbReference type="ChEBI" id="CHEBI:18420"/>
    </cofactor>
</comment>
<comment type="similarity">
    <text evidence="1">Belongs to the TRAFAC class TrmE-Era-EngA-EngB-Septin-like GTPase superfamily. EngB GTPase family.</text>
</comment>
<sequence>MDVNNVELIISAVRPEQYPETDLPEYALAGRSNVGKSSFINTMIRRKSMARISQKPGKTQTLNFYKIEEALFFVDVPGYGFAKVSKTEREKWGVMIETYITSREQLRGVIQIVDLRHKPTEDDRMMYEFLKYYDIPVIVIATKADKIPRSKWQKNAKIVRETLDFDPDDKFVLFSSETKMGKDEAWQFIKEGME</sequence>
<feature type="chain" id="PRO_0000157762" description="Probable GTP-binding protein EngB">
    <location>
        <begin position="1"/>
        <end position="194"/>
    </location>
</feature>
<feature type="domain" description="EngB-type G" evidence="1">
    <location>
        <begin position="22"/>
        <end position="194"/>
    </location>
</feature>
<feature type="binding site" evidence="1">
    <location>
        <begin position="30"/>
        <end position="37"/>
    </location>
    <ligand>
        <name>GTP</name>
        <dbReference type="ChEBI" id="CHEBI:37565"/>
    </ligand>
</feature>
<feature type="binding site" evidence="1">
    <location>
        <position position="37"/>
    </location>
    <ligand>
        <name>Mg(2+)</name>
        <dbReference type="ChEBI" id="CHEBI:18420"/>
    </ligand>
</feature>
<feature type="binding site" evidence="1">
    <location>
        <begin position="57"/>
        <end position="61"/>
    </location>
    <ligand>
        <name>GTP</name>
        <dbReference type="ChEBI" id="CHEBI:37565"/>
    </ligand>
</feature>
<feature type="binding site" evidence="1">
    <location>
        <position position="59"/>
    </location>
    <ligand>
        <name>Mg(2+)</name>
        <dbReference type="ChEBI" id="CHEBI:18420"/>
    </ligand>
</feature>
<feature type="binding site" evidence="1">
    <location>
        <begin position="75"/>
        <end position="78"/>
    </location>
    <ligand>
        <name>GTP</name>
        <dbReference type="ChEBI" id="CHEBI:37565"/>
    </ligand>
</feature>
<feature type="binding site" evidence="1">
    <location>
        <begin position="142"/>
        <end position="145"/>
    </location>
    <ligand>
        <name>GTP</name>
        <dbReference type="ChEBI" id="CHEBI:37565"/>
    </ligand>
</feature>
<feature type="binding site" evidence="1">
    <location>
        <begin position="174"/>
        <end position="176"/>
    </location>
    <ligand>
        <name>GTP</name>
        <dbReference type="ChEBI" id="CHEBI:37565"/>
    </ligand>
</feature>
<keyword id="KW-0131">Cell cycle</keyword>
<keyword id="KW-0132">Cell division</keyword>
<keyword id="KW-0342">GTP-binding</keyword>
<keyword id="KW-0460">Magnesium</keyword>
<keyword id="KW-0479">Metal-binding</keyword>
<keyword id="KW-0547">Nucleotide-binding</keyword>
<keyword id="KW-1185">Reference proteome</keyword>
<keyword id="KW-0717">Septation</keyword>
<organism>
    <name type="scientific">Listeria monocytogenes serovar 1/2a (strain ATCC BAA-679 / EGD-e)</name>
    <dbReference type="NCBI Taxonomy" id="169963"/>
    <lineage>
        <taxon>Bacteria</taxon>
        <taxon>Bacillati</taxon>
        <taxon>Bacillota</taxon>
        <taxon>Bacilli</taxon>
        <taxon>Bacillales</taxon>
        <taxon>Listeriaceae</taxon>
        <taxon>Listeria</taxon>
    </lineage>
</organism>
<name>ENGB_LISMO</name>
<accession>Q8Y6X3</accession>
<reference key="1">
    <citation type="journal article" date="2001" name="Science">
        <title>Comparative genomics of Listeria species.</title>
        <authorList>
            <person name="Glaser P."/>
            <person name="Frangeul L."/>
            <person name="Buchrieser C."/>
            <person name="Rusniok C."/>
            <person name="Amend A."/>
            <person name="Baquero F."/>
            <person name="Berche P."/>
            <person name="Bloecker H."/>
            <person name="Brandt P."/>
            <person name="Chakraborty T."/>
            <person name="Charbit A."/>
            <person name="Chetouani F."/>
            <person name="Couve E."/>
            <person name="de Daruvar A."/>
            <person name="Dehoux P."/>
            <person name="Domann E."/>
            <person name="Dominguez-Bernal G."/>
            <person name="Duchaud E."/>
            <person name="Durant L."/>
            <person name="Dussurget O."/>
            <person name="Entian K.-D."/>
            <person name="Fsihi H."/>
            <person name="Garcia-del Portillo F."/>
            <person name="Garrido P."/>
            <person name="Gautier L."/>
            <person name="Goebel W."/>
            <person name="Gomez-Lopez N."/>
            <person name="Hain T."/>
            <person name="Hauf J."/>
            <person name="Jackson D."/>
            <person name="Jones L.-M."/>
            <person name="Kaerst U."/>
            <person name="Kreft J."/>
            <person name="Kuhn M."/>
            <person name="Kunst F."/>
            <person name="Kurapkat G."/>
            <person name="Madueno E."/>
            <person name="Maitournam A."/>
            <person name="Mata Vicente J."/>
            <person name="Ng E."/>
            <person name="Nedjari H."/>
            <person name="Nordsiek G."/>
            <person name="Novella S."/>
            <person name="de Pablos B."/>
            <person name="Perez-Diaz J.-C."/>
            <person name="Purcell R."/>
            <person name="Remmel B."/>
            <person name="Rose M."/>
            <person name="Schlueter T."/>
            <person name="Simoes N."/>
            <person name="Tierrez A."/>
            <person name="Vazquez-Boland J.-A."/>
            <person name="Voss H."/>
            <person name="Wehland J."/>
            <person name="Cossart P."/>
        </authorList>
    </citation>
    <scope>NUCLEOTIDE SEQUENCE [LARGE SCALE GENOMIC DNA]</scope>
    <source>
        <strain>ATCC BAA-679 / EGD-e</strain>
    </source>
</reference>
<protein>
    <recommendedName>
        <fullName evidence="1">Probable GTP-binding protein EngB</fullName>
    </recommendedName>
</protein>